<sequence>MDRIIGIDLGTTNSCVSILENGNVKVIENAEGTRTTPSIIAYANDGEILVGQSAKRQAVTNPHNTLYAVKRLIGRKFEEDVVQKDIQMVPYKIVKADNGDAWVEVNGQKMAPPQISAEILKKMKKTAEDYLGEAVTEAVITVPAYFNDSQRQATKDAGRIASVDVKRIINEPTAAALAYGMDKAKGDHTVIVYDLGGGTFDVSVIEIAEVDGEHQFEVLATNGDTFLGGEDFDIRLIDYFVHEFKKESGMNLKGDPLAMQRLKEAAEKAKIELSSSTQTEVNLPYITADATGPKHLVVKISRSKLESLVEDLVQRTIAPCEMALKDAGIDRSKINDVILVGGQTRMPLVQKLVTEFFGKEARKDVNPDEAVAMGAAIQGAVLAGDVKDVLLLDVSPLTLGIEAMGGVMTALIKKTPRFLPRNPSVLTADDNQENAVAIHVLQGERKQAGQNKSLGKFDLAEIPPAPRGVPQIEVTFDIDANGILHVGAKDKATGKQQSIVIKANSGLSEEEIQQMVRDAEVNSEEDRKFEELASARNQGDALVHSTRKMIADAGDKVTAEQKTAVEAALVALEAAIKGDDKAAIEAKVEELSKVSAPIAQKMYAEQAENPEAAAKPAEENAKADDVVDAEFEEVKDHK</sequence>
<organism>
    <name type="scientific">Pseudomonas savastanoi pv. glycinea</name>
    <name type="common">Pseudomonas syringae pv. glycinea</name>
    <dbReference type="NCBI Taxonomy" id="318"/>
    <lineage>
        <taxon>Bacteria</taxon>
        <taxon>Pseudomonadati</taxon>
        <taxon>Pseudomonadota</taxon>
        <taxon>Gammaproteobacteria</taxon>
        <taxon>Pseudomonadales</taxon>
        <taxon>Pseudomonadaceae</taxon>
        <taxon>Pseudomonas</taxon>
    </lineage>
</organism>
<comment type="function">
    <text evidence="1">Acts as a chaperone.</text>
</comment>
<comment type="induction">
    <text evidence="1">By stress conditions e.g. heat shock (By similarity).</text>
</comment>
<comment type="similarity">
    <text evidence="3">Belongs to the heat shock protein 70 family.</text>
</comment>
<reference key="1">
    <citation type="journal article" date="1999" name="Mol. Plant Microbe Interact.">
        <title>dnaK and the heat stress response of Pseudomonas syringae pv. glycinea.</title>
        <authorList>
            <person name="Keith L.M.W."/>
            <person name="Partridge J.E."/>
            <person name="Bender C.L."/>
        </authorList>
    </citation>
    <scope>NUCLEOTIDE SEQUENCE [GENOMIC DNA]</scope>
    <source>
        <strain>PG4180</strain>
    </source>
</reference>
<name>DNAK_PSESG</name>
<dbReference type="EMBL" id="AF135163">
    <property type="protein sequence ID" value="AAD31868.1"/>
    <property type="molecule type" value="Genomic_DNA"/>
</dbReference>
<dbReference type="SMR" id="Q9WWG9"/>
<dbReference type="GO" id="GO:0005524">
    <property type="term" value="F:ATP binding"/>
    <property type="evidence" value="ECO:0007669"/>
    <property type="project" value="UniProtKB-UniRule"/>
</dbReference>
<dbReference type="GO" id="GO:0140662">
    <property type="term" value="F:ATP-dependent protein folding chaperone"/>
    <property type="evidence" value="ECO:0007669"/>
    <property type="project" value="InterPro"/>
</dbReference>
<dbReference type="GO" id="GO:0051082">
    <property type="term" value="F:unfolded protein binding"/>
    <property type="evidence" value="ECO:0007669"/>
    <property type="project" value="InterPro"/>
</dbReference>
<dbReference type="CDD" id="cd10234">
    <property type="entry name" value="ASKHA_NBD_HSP70_DnaK-like"/>
    <property type="match status" value="1"/>
</dbReference>
<dbReference type="FunFam" id="3.30.30.30:FF:000003">
    <property type="entry name" value="Heat shock protein 9"/>
    <property type="match status" value="1"/>
</dbReference>
<dbReference type="FunFam" id="1.20.1270.10:FF:000001">
    <property type="entry name" value="Molecular chaperone DnaK"/>
    <property type="match status" value="1"/>
</dbReference>
<dbReference type="FunFam" id="3.30.420.40:FF:000004">
    <property type="entry name" value="Molecular chaperone DnaK"/>
    <property type="match status" value="1"/>
</dbReference>
<dbReference type="FunFam" id="3.90.640.10:FF:000003">
    <property type="entry name" value="Molecular chaperone DnaK"/>
    <property type="match status" value="1"/>
</dbReference>
<dbReference type="Gene3D" id="1.20.1270.10">
    <property type="match status" value="1"/>
</dbReference>
<dbReference type="Gene3D" id="3.30.420.40">
    <property type="match status" value="2"/>
</dbReference>
<dbReference type="Gene3D" id="3.90.640.10">
    <property type="entry name" value="Actin, Chain A, domain 4"/>
    <property type="match status" value="1"/>
</dbReference>
<dbReference type="Gene3D" id="2.60.34.10">
    <property type="entry name" value="Substrate Binding Domain Of DNAk, Chain A, domain 1"/>
    <property type="match status" value="1"/>
</dbReference>
<dbReference type="HAMAP" id="MF_00332">
    <property type="entry name" value="DnaK"/>
    <property type="match status" value="1"/>
</dbReference>
<dbReference type="InterPro" id="IPR043129">
    <property type="entry name" value="ATPase_NBD"/>
</dbReference>
<dbReference type="InterPro" id="IPR012725">
    <property type="entry name" value="Chaperone_DnaK"/>
</dbReference>
<dbReference type="InterPro" id="IPR018181">
    <property type="entry name" value="Heat_shock_70_CS"/>
</dbReference>
<dbReference type="InterPro" id="IPR029048">
    <property type="entry name" value="HSP70_C_sf"/>
</dbReference>
<dbReference type="InterPro" id="IPR029047">
    <property type="entry name" value="HSP70_peptide-bd_sf"/>
</dbReference>
<dbReference type="InterPro" id="IPR013126">
    <property type="entry name" value="Hsp_70_fam"/>
</dbReference>
<dbReference type="NCBIfam" id="NF001413">
    <property type="entry name" value="PRK00290.1"/>
    <property type="match status" value="1"/>
</dbReference>
<dbReference type="NCBIfam" id="TIGR02350">
    <property type="entry name" value="prok_dnaK"/>
    <property type="match status" value="1"/>
</dbReference>
<dbReference type="PANTHER" id="PTHR19375">
    <property type="entry name" value="HEAT SHOCK PROTEIN 70KDA"/>
    <property type="match status" value="1"/>
</dbReference>
<dbReference type="Pfam" id="PF00012">
    <property type="entry name" value="HSP70"/>
    <property type="match status" value="1"/>
</dbReference>
<dbReference type="PRINTS" id="PR00301">
    <property type="entry name" value="HEATSHOCK70"/>
</dbReference>
<dbReference type="SUPFAM" id="SSF53067">
    <property type="entry name" value="Actin-like ATPase domain"/>
    <property type="match status" value="2"/>
</dbReference>
<dbReference type="SUPFAM" id="SSF100934">
    <property type="entry name" value="Heat shock protein 70kD (HSP70), C-terminal subdomain"/>
    <property type="match status" value="1"/>
</dbReference>
<dbReference type="SUPFAM" id="SSF100920">
    <property type="entry name" value="Heat shock protein 70kD (HSP70), peptide-binding domain"/>
    <property type="match status" value="1"/>
</dbReference>
<dbReference type="PROSITE" id="PS00297">
    <property type="entry name" value="HSP70_1"/>
    <property type="match status" value="1"/>
</dbReference>
<dbReference type="PROSITE" id="PS00329">
    <property type="entry name" value="HSP70_2"/>
    <property type="match status" value="1"/>
</dbReference>
<dbReference type="PROSITE" id="PS01036">
    <property type="entry name" value="HSP70_3"/>
    <property type="match status" value="1"/>
</dbReference>
<feature type="chain" id="PRO_0000078520" description="Chaperone protein DnaK">
    <location>
        <begin position="1"/>
        <end position="638"/>
    </location>
</feature>
<feature type="region of interest" description="Disordered" evidence="2">
    <location>
        <begin position="605"/>
        <end position="624"/>
    </location>
</feature>
<feature type="compositionally biased region" description="Low complexity" evidence="2">
    <location>
        <begin position="605"/>
        <end position="615"/>
    </location>
</feature>
<feature type="modified residue" description="Phosphothreonine; by autocatalysis" evidence="1">
    <location>
        <position position="199"/>
    </location>
</feature>
<gene>
    <name type="primary">dnaK</name>
</gene>
<keyword id="KW-0067">ATP-binding</keyword>
<keyword id="KW-0143">Chaperone</keyword>
<keyword id="KW-0547">Nucleotide-binding</keyword>
<keyword id="KW-0597">Phosphoprotein</keyword>
<keyword id="KW-0346">Stress response</keyword>
<accession>Q9WWG9</accession>
<protein>
    <recommendedName>
        <fullName>Chaperone protein DnaK</fullName>
    </recommendedName>
    <alternativeName>
        <fullName>HSP70</fullName>
    </alternativeName>
    <alternativeName>
        <fullName>Heat shock 70 kDa protein</fullName>
    </alternativeName>
    <alternativeName>
        <fullName>Heat shock protein 70</fullName>
    </alternativeName>
</protein>
<evidence type="ECO:0000250" key="1"/>
<evidence type="ECO:0000256" key="2">
    <source>
        <dbReference type="SAM" id="MobiDB-lite"/>
    </source>
</evidence>
<evidence type="ECO:0000305" key="3"/>
<proteinExistence type="inferred from homology"/>